<organism>
    <name type="scientific">Sulfurimonas denitrificans (strain ATCC 33889 / DSM 1251)</name>
    <name type="common">Thiomicrospira denitrificans (strain ATCC 33889 / DSM 1251)</name>
    <dbReference type="NCBI Taxonomy" id="326298"/>
    <lineage>
        <taxon>Bacteria</taxon>
        <taxon>Pseudomonadati</taxon>
        <taxon>Campylobacterota</taxon>
        <taxon>Epsilonproteobacteria</taxon>
        <taxon>Campylobacterales</taxon>
        <taxon>Sulfurimonadaceae</taxon>
        <taxon>Sulfurimonas</taxon>
    </lineage>
</organism>
<feature type="chain" id="PRO_1000022139" description="Isoleucine--tRNA ligase">
    <location>
        <begin position="1"/>
        <end position="919"/>
    </location>
</feature>
<feature type="short sequence motif" description="'HIGH' region">
    <location>
        <begin position="57"/>
        <end position="67"/>
    </location>
</feature>
<feature type="short sequence motif" description="'KMSKS' region">
    <location>
        <begin position="610"/>
        <end position="614"/>
    </location>
</feature>
<feature type="binding site" evidence="1">
    <location>
        <position position="569"/>
    </location>
    <ligand>
        <name>L-isoleucyl-5'-AMP</name>
        <dbReference type="ChEBI" id="CHEBI:178002"/>
    </ligand>
</feature>
<feature type="binding site" evidence="1">
    <location>
        <position position="613"/>
    </location>
    <ligand>
        <name>ATP</name>
        <dbReference type="ChEBI" id="CHEBI:30616"/>
    </ligand>
</feature>
<feature type="binding site" evidence="1">
    <location>
        <position position="895"/>
    </location>
    <ligand>
        <name>Zn(2+)</name>
        <dbReference type="ChEBI" id="CHEBI:29105"/>
    </ligand>
</feature>
<feature type="binding site" evidence="1">
    <location>
        <position position="898"/>
    </location>
    <ligand>
        <name>Zn(2+)</name>
        <dbReference type="ChEBI" id="CHEBI:29105"/>
    </ligand>
</feature>
<feature type="binding site" evidence="1">
    <location>
        <position position="910"/>
    </location>
    <ligand>
        <name>Zn(2+)</name>
        <dbReference type="ChEBI" id="CHEBI:29105"/>
    </ligand>
</feature>
<feature type="binding site" evidence="1">
    <location>
        <position position="913"/>
    </location>
    <ligand>
        <name>Zn(2+)</name>
        <dbReference type="ChEBI" id="CHEBI:29105"/>
    </ligand>
</feature>
<proteinExistence type="inferred from homology"/>
<dbReference type="EC" id="6.1.1.5" evidence="1"/>
<dbReference type="EMBL" id="CP000153">
    <property type="protein sequence ID" value="ABB44059.1"/>
    <property type="molecule type" value="Genomic_DNA"/>
</dbReference>
<dbReference type="RefSeq" id="WP_011372412.1">
    <property type="nucleotide sequence ID" value="NC_007575.1"/>
</dbReference>
<dbReference type="SMR" id="Q30SH2"/>
<dbReference type="STRING" id="326298.Suden_0780"/>
<dbReference type="KEGG" id="tdn:Suden_0780"/>
<dbReference type="eggNOG" id="COG0060">
    <property type="taxonomic scope" value="Bacteria"/>
</dbReference>
<dbReference type="HOGENOM" id="CLU_001493_7_1_7"/>
<dbReference type="OrthoDB" id="9810365at2"/>
<dbReference type="Proteomes" id="UP000002714">
    <property type="component" value="Chromosome"/>
</dbReference>
<dbReference type="GO" id="GO:0005829">
    <property type="term" value="C:cytosol"/>
    <property type="evidence" value="ECO:0007669"/>
    <property type="project" value="TreeGrafter"/>
</dbReference>
<dbReference type="GO" id="GO:0002161">
    <property type="term" value="F:aminoacyl-tRNA deacylase activity"/>
    <property type="evidence" value="ECO:0007669"/>
    <property type="project" value="InterPro"/>
</dbReference>
<dbReference type="GO" id="GO:0005524">
    <property type="term" value="F:ATP binding"/>
    <property type="evidence" value="ECO:0007669"/>
    <property type="project" value="UniProtKB-UniRule"/>
</dbReference>
<dbReference type="GO" id="GO:0004822">
    <property type="term" value="F:isoleucine-tRNA ligase activity"/>
    <property type="evidence" value="ECO:0007669"/>
    <property type="project" value="UniProtKB-UniRule"/>
</dbReference>
<dbReference type="GO" id="GO:0000049">
    <property type="term" value="F:tRNA binding"/>
    <property type="evidence" value="ECO:0007669"/>
    <property type="project" value="InterPro"/>
</dbReference>
<dbReference type="GO" id="GO:0008270">
    <property type="term" value="F:zinc ion binding"/>
    <property type="evidence" value="ECO:0007669"/>
    <property type="project" value="UniProtKB-UniRule"/>
</dbReference>
<dbReference type="GO" id="GO:0006428">
    <property type="term" value="P:isoleucyl-tRNA aminoacylation"/>
    <property type="evidence" value="ECO:0007669"/>
    <property type="project" value="UniProtKB-UniRule"/>
</dbReference>
<dbReference type="CDD" id="cd07960">
    <property type="entry name" value="Anticodon_Ia_Ile_BEm"/>
    <property type="match status" value="1"/>
</dbReference>
<dbReference type="CDD" id="cd00818">
    <property type="entry name" value="IleRS_core"/>
    <property type="match status" value="1"/>
</dbReference>
<dbReference type="FunFam" id="3.40.50.620:FF:000092">
    <property type="entry name" value="Isoleucine--tRNA ligase"/>
    <property type="match status" value="1"/>
</dbReference>
<dbReference type="Gene3D" id="1.10.730.20">
    <property type="match status" value="1"/>
</dbReference>
<dbReference type="Gene3D" id="3.40.50.620">
    <property type="entry name" value="HUPs"/>
    <property type="match status" value="2"/>
</dbReference>
<dbReference type="Gene3D" id="1.10.10.830">
    <property type="entry name" value="Ile-tRNA synthetase CP2 domain-like"/>
    <property type="match status" value="1"/>
</dbReference>
<dbReference type="Gene3D" id="3.90.740.10">
    <property type="entry name" value="Valyl/Leucyl/Isoleucyl-tRNA synthetase, editing domain"/>
    <property type="match status" value="1"/>
</dbReference>
<dbReference type="HAMAP" id="MF_02002">
    <property type="entry name" value="Ile_tRNA_synth_type1"/>
    <property type="match status" value="1"/>
</dbReference>
<dbReference type="InterPro" id="IPR002300">
    <property type="entry name" value="aa-tRNA-synth_Ia"/>
</dbReference>
<dbReference type="InterPro" id="IPR033708">
    <property type="entry name" value="Anticodon_Ile_BEm"/>
</dbReference>
<dbReference type="InterPro" id="IPR002301">
    <property type="entry name" value="Ile-tRNA-ligase"/>
</dbReference>
<dbReference type="InterPro" id="IPR023585">
    <property type="entry name" value="Ile-tRNA-ligase_type1"/>
</dbReference>
<dbReference type="InterPro" id="IPR050081">
    <property type="entry name" value="Ile-tRNA_ligase"/>
</dbReference>
<dbReference type="InterPro" id="IPR013155">
    <property type="entry name" value="M/V/L/I-tRNA-synth_anticd-bd"/>
</dbReference>
<dbReference type="InterPro" id="IPR014729">
    <property type="entry name" value="Rossmann-like_a/b/a_fold"/>
</dbReference>
<dbReference type="InterPro" id="IPR009080">
    <property type="entry name" value="tRNAsynth_Ia_anticodon-bd"/>
</dbReference>
<dbReference type="InterPro" id="IPR009008">
    <property type="entry name" value="Val/Leu/Ile-tRNA-synth_edit"/>
</dbReference>
<dbReference type="NCBIfam" id="TIGR00392">
    <property type="entry name" value="ileS"/>
    <property type="match status" value="1"/>
</dbReference>
<dbReference type="PANTHER" id="PTHR42765:SF1">
    <property type="entry name" value="ISOLEUCINE--TRNA LIGASE, MITOCHONDRIAL"/>
    <property type="match status" value="1"/>
</dbReference>
<dbReference type="PANTHER" id="PTHR42765">
    <property type="entry name" value="SOLEUCYL-TRNA SYNTHETASE"/>
    <property type="match status" value="1"/>
</dbReference>
<dbReference type="Pfam" id="PF08264">
    <property type="entry name" value="Anticodon_1"/>
    <property type="match status" value="1"/>
</dbReference>
<dbReference type="Pfam" id="PF00133">
    <property type="entry name" value="tRNA-synt_1"/>
    <property type="match status" value="1"/>
</dbReference>
<dbReference type="PRINTS" id="PR00984">
    <property type="entry name" value="TRNASYNTHILE"/>
</dbReference>
<dbReference type="SUPFAM" id="SSF47323">
    <property type="entry name" value="Anticodon-binding domain of a subclass of class I aminoacyl-tRNA synthetases"/>
    <property type="match status" value="1"/>
</dbReference>
<dbReference type="SUPFAM" id="SSF52374">
    <property type="entry name" value="Nucleotidylyl transferase"/>
    <property type="match status" value="1"/>
</dbReference>
<dbReference type="SUPFAM" id="SSF50677">
    <property type="entry name" value="ValRS/IleRS/LeuRS editing domain"/>
    <property type="match status" value="1"/>
</dbReference>
<comment type="function">
    <text evidence="1">Catalyzes the attachment of isoleucine to tRNA(Ile). As IleRS can inadvertently accommodate and process structurally similar amino acids such as valine, to avoid such errors it has two additional distinct tRNA(Ile)-dependent editing activities. One activity is designated as 'pretransfer' editing and involves the hydrolysis of activated Val-AMP. The other activity is designated 'posttransfer' editing and involves deacylation of mischarged Val-tRNA(Ile).</text>
</comment>
<comment type="catalytic activity">
    <reaction evidence="1">
        <text>tRNA(Ile) + L-isoleucine + ATP = L-isoleucyl-tRNA(Ile) + AMP + diphosphate</text>
        <dbReference type="Rhea" id="RHEA:11060"/>
        <dbReference type="Rhea" id="RHEA-COMP:9666"/>
        <dbReference type="Rhea" id="RHEA-COMP:9695"/>
        <dbReference type="ChEBI" id="CHEBI:30616"/>
        <dbReference type="ChEBI" id="CHEBI:33019"/>
        <dbReference type="ChEBI" id="CHEBI:58045"/>
        <dbReference type="ChEBI" id="CHEBI:78442"/>
        <dbReference type="ChEBI" id="CHEBI:78528"/>
        <dbReference type="ChEBI" id="CHEBI:456215"/>
        <dbReference type="EC" id="6.1.1.5"/>
    </reaction>
</comment>
<comment type="cofactor">
    <cofactor evidence="1">
        <name>Zn(2+)</name>
        <dbReference type="ChEBI" id="CHEBI:29105"/>
    </cofactor>
    <text evidence="1">Binds 1 zinc ion per subunit.</text>
</comment>
<comment type="subunit">
    <text evidence="1">Monomer.</text>
</comment>
<comment type="subcellular location">
    <subcellularLocation>
        <location evidence="1">Cytoplasm</location>
    </subcellularLocation>
</comment>
<comment type="domain">
    <text evidence="1">IleRS has two distinct active sites: one for aminoacylation and one for editing. The misactivated valine is translocated from the active site to the editing site, which sterically excludes the correctly activated isoleucine. The single editing site contains two valyl binding pockets, one specific for each substrate (Val-AMP or Val-tRNA(Ile)).</text>
</comment>
<comment type="similarity">
    <text evidence="1">Belongs to the class-I aminoacyl-tRNA synthetase family. IleS type 1 subfamily.</text>
</comment>
<sequence>MDYKDTLLLPTTKFEMRGNLINNEPIRYASWDEKKIYEKMKKNRKNAQSFTLHDGPPYANGHTHIGHALNKILKDIIVKHNYFSGKSVRFTPGWDCHGLPIEQQVEKKLGGKQKKELLEKAKIRELCRAHAAEFVDIQREEFKKLGVIADWENPYVTMDFKFEANIYRTLCNVAKKGLLIERSKPVFWSWAERTALAEAEVEYEDKEDYSIFIAFELSDEAKAKLSINSKAALVIWTTTPWTIPANTGISLNPEEEYILTTTGYIVAKKLLSSLNESKILSGDIAQTFKAKEFENLLALNPLNGRTSRIVLGEHVLVENGTGCVHTAPGHGEDDYRIGLVYDLEVVMPVDETGCYDETIVRDGLIPNAEDFLGRHIFKSNEDLITLMGESVVHVSKFKHSYPHCWRSHTPLIFRATKQWFISVDEKPSGSDKTLRDIALSEVEKTLFFPETGRNRLKSMVANRPDWCISRQRDWGVPIAFFRVKATGEVLLDEKVLNFTAMVFEMHGSDAWYSMPTEQLLYPGAGYSADELEKVTDILDVWFDSGSTWYSVLKSRNYDAGEFQADLYVEGSDQHRGWFQSSMFLSAAVEHKAPYKGVLTHGFTVDEKGEKMSKSKGNVVAPETVLKEYGSEILRLWVASSDYQGDLKISQSILKQSAENYRKLRNTFRIMLANINDLHALTPYEKMGELDKWILNEAKSVFDGVHKSFSNYNFVNGMSLLNNFIVNELSGIYIDITKDSLYCDAKDDARRTSSQSAMALIVKSLLTLIAPILTYTADEIVEYLPEVIRESKEDIFDFVHKNIDVAESGFNTDYMYAAREKFYEIVDGLKKEKIIKNTLELVIVTESKKIAEMDKTAAEDWFVVSGISHSEVIAELGKFEVDGSIFVIQKATAAKCPRCWKYQAKDETATCTRCSKVLNA</sequence>
<name>SYI_SULDN</name>
<accession>Q30SH2</accession>
<gene>
    <name evidence="1" type="primary">ileS</name>
    <name type="ordered locus">Suden_0780</name>
</gene>
<evidence type="ECO:0000255" key="1">
    <source>
        <dbReference type="HAMAP-Rule" id="MF_02002"/>
    </source>
</evidence>
<protein>
    <recommendedName>
        <fullName evidence="1">Isoleucine--tRNA ligase</fullName>
        <ecNumber evidence="1">6.1.1.5</ecNumber>
    </recommendedName>
    <alternativeName>
        <fullName evidence="1">Isoleucyl-tRNA synthetase</fullName>
        <shortName evidence="1">IleRS</shortName>
    </alternativeName>
</protein>
<keyword id="KW-0030">Aminoacyl-tRNA synthetase</keyword>
<keyword id="KW-0067">ATP-binding</keyword>
<keyword id="KW-0963">Cytoplasm</keyword>
<keyword id="KW-0436">Ligase</keyword>
<keyword id="KW-0479">Metal-binding</keyword>
<keyword id="KW-0547">Nucleotide-binding</keyword>
<keyword id="KW-0648">Protein biosynthesis</keyword>
<keyword id="KW-1185">Reference proteome</keyword>
<keyword id="KW-0862">Zinc</keyword>
<reference key="1">
    <citation type="journal article" date="2008" name="Appl. Environ. Microbiol.">
        <title>Genome of the epsilonproteobacterial chemolithoautotroph Sulfurimonas denitrificans.</title>
        <authorList>
            <person name="Sievert S.M."/>
            <person name="Scott K.M."/>
            <person name="Klotz M.G."/>
            <person name="Chain P.S.G."/>
            <person name="Hauser L.J."/>
            <person name="Hemp J."/>
            <person name="Huegler M."/>
            <person name="Land M."/>
            <person name="Lapidus A."/>
            <person name="Larimer F.W."/>
            <person name="Lucas S."/>
            <person name="Malfatti S.A."/>
            <person name="Meyer F."/>
            <person name="Paulsen I.T."/>
            <person name="Ren Q."/>
            <person name="Simon J."/>
            <person name="Bailey K."/>
            <person name="Diaz E."/>
            <person name="Fitzpatrick K.A."/>
            <person name="Glover B."/>
            <person name="Gwatney N."/>
            <person name="Korajkic A."/>
            <person name="Long A."/>
            <person name="Mobberley J.M."/>
            <person name="Pantry S.N."/>
            <person name="Pazder G."/>
            <person name="Peterson S."/>
            <person name="Quintanilla J.D."/>
            <person name="Sprinkle R."/>
            <person name="Stephens J."/>
            <person name="Thomas P."/>
            <person name="Vaughn R."/>
            <person name="Weber M.J."/>
            <person name="Wooten L.L."/>
        </authorList>
    </citation>
    <scope>NUCLEOTIDE SEQUENCE [LARGE SCALE GENOMIC DNA]</scope>
    <source>
        <strain>ATCC 33889 / DSM 1251</strain>
    </source>
</reference>